<keyword id="KW-0004">4Fe-4S</keyword>
<keyword id="KW-0249">Electron transport</keyword>
<keyword id="KW-0408">Iron</keyword>
<keyword id="KW-0411">Iron-sulfur</keyword>
<keyword id="KW-0479">Metal-binding</keyword>
<keyword id="KW-0677">Repeat</keyword>
<keyword id="KW-0813">Transport</keyword>
<organism>
    <name type="scientific">Bacillus cereus (strain AH820)</name>
    <dbReference type="NCBI Taxonomy" id="405535"/>
    <lineage>
        <taxon>Bacteria</taxon>
        <taxon>Bacillati</taxon>
        <taxon>Bacillota</taxon>
        <taxon>Bacilli</taxon>
        <taxon>Bacillales</taxon>
        <taxon>Bacillaceae</taxon>
        <taxon>Bacillus</taxon>
        <taxon>Bacillus cereus group</taxon>
    </lineage>
</organism>
<reference key="1">
    <citation type="submission" date="2008-10" db="EMBL/GenBank/DDBJ databases">
        <title>Genome sequence of Bacillus cereus AH820.</title>
        <authorList>
            <person name="Dodson R.J."/>
            <person name="Durkin A.S."/>
            <person name="Rosovitz M.J."/>
            <person name="Rasko D.A."/>
            <person name="Hoffmaster A."/>
            <person name="Ravel J."/>
            <person name="Sutton G."/>
        </authorList>
    </citation>
    <scope>NUCLEOTIDE SEQUENCE [LARGE SCALE GENOMIC DNA]</scope>
    <source>
        <strain>AH820</strain>
    </source>
</reference>
<protein>
    <recommendedName>
        <fullName evidence="1">Lactate utilization protein B</fullName>
    </recommendedName>
</protein>
<accession>B7JF01</accession>
<evidence type="ECO:0000255" key="1">
    <source>
        <dbReference type="HAMAP-Rule" id="MF_02103"/>
    </source>
</evidence>
<proteinExistence type="inferred from homology"/>
<name>LUTB_BACC0</name>
<comment type="function">
    <text evidence="1">Is involved in L-lactate degradation and allows cells to grow with lactate as the sole carbon source. Has probably a role as an electron transporter during oxidation of L-lactate.</text>
</comment>
<comment type="similarity">
    <text evidence="1">Belongs to the LutB/YkgF family.</text>
</comment>
<dbReference type="EMBL" id="CP001283">
    <property type="protein sequence ID" value="ACK87244.1"/>
    <property type="molecule type" value="Genomic_DNA"/>
</dbReference>
<dbReference type="RefSeq" id="WP_000061917.1">
    <property type="nucleotide sequence ID" value="NC_011773.1"/>
</dbReference>
<dbReference type="KEGG" id="bcu:BCAH820_1393"/>
<dbReference type="HOGENOM" id="CLU_027059_2_0_9"/>
<dbReference type="Proteomes" id="UP000001363">
    <property type="component" value="Chromosome"/>
</dbReference>
<dbReference type="GO" id="GO:0051539">
    <property type="term" value="F:4 iron, 4 sulfur cluster binding"/>
    <property type="evidence" value="ECO:0007669"/>
    <property type="project" value="UniProtKB-KW"/>
</dbReference>
<dbReference type="GO" id="GO:0046872">
    <property type="term" value="F:metal ion binding"/>
    <property type="evidence" value="ECO:0007669"/>
    <property type="project" value="UniProtKB-KW"/>
</dbReference>
<dbReference type="GO" id="GO:0006089">
    <property type="term" value="P:lactate metabolic process"/>
    <property type="evidence" value="ECO:0007669"/>
    <property type="project" value="UniProtKB-UniRule"/>
</dbReference>
<dbReference type="Gene3D" id="1.10.1060.10">
    <property type="entry name" value="Alpha-helical ferredoxin"/>
    <property type="match status" value="1"/>
</dbReference>
<dbReference type="Gene3D" id="3.40.50.10420">
    <property type="entry name" value="NagB/RpiA/CoA transferase-like"/>
    <property type="match status" value="1"/>
</dbReference>
<dbReference type="HAMAP" id="MF_02103">
    <property type="entry name" value="LutB"/>
    <property type="match status" value="1"/>
</dbReference>
<dbReference type="InterPro" id="IPR017896">
    <property type="entry name" value="4Fe4S_Fe-S-bd"/>
</dbReference>
<dbReference type="InterPro" id="IPR017900">
    <property type="entry name" value="4Fe4S_Fe_S_CS"/>
</dbReference>
<dbReference type="InterPro" id="IPR024185">
    <property type="entry name" value="FTHF_cligase-like_sf"/>
</dbReference>
<dbReference type="InterPro" id="IPR009051">
    <property type="entry name" value="Helical_ferredxn"/>
</dbReference>
<dbReference type="InterPro" id="IPR003741">
    <property type="entry name" value="LUD_dom"/>
</dbReference>
<dbReference type="InterPro" id="IPR022825">
    <property type="entry name" value="LutB"/>
</dbReference>
<dbReference type="InterPro" id="IPR004452">
    <property type="entry name" value="LutB/LldF"/>
</dbReference>
<dbReference type="InterPro" id="IPR024569">
    <property type="entry name" value="LutB_C"/>
</dbReference>
<dbReference type="InterPro" id="IPR037171">
    <property type="entry name" value="NagB/RpiA_transferase-like"/>
</dbReference>
<dbReference type="NCBIfam" id="TIGR00273">
    <property type="entry name" value="LutB/LldF family L-lactate oxidation iron-sulfur protein"/>
    <property type="match status" value="1"/>
</dbReference>
<dbReference type="PANTHER" id="PTHR47153">
    <property type="entry name" value="LACTATE UTILIZATION PROTEIN B"/>
    <property type="match status" value="1"/>
</dbReference>
<dbReference type="PANTHER" id="PTHR47153:SF2">
    <property type="entry name" value="LACTATE UTILIZATION PROTEIN B"/>
    <property type="match status" value="1"/>
</dbReference>
<dbReference type="Pfam" id="PF13183">
    <property type="entry name" value="Fer4_8"/>
    <property type="match status" value="1"/>
</dbReference>
<dbReference type="Pfam" id="PF02589">
    <property type="entry name" value="LUD_dom"/>
    <property type="match status" value="1"/>
</dbReference>
<dbReference type="Pfam" id="PF11870">
    <property type="entry name" value="LutB_C"/>
    <property type="match status" value="1"/>
</dbReference>
<dbReference type="SUPFAM" id="SSF46548">
    <property type="entry name" value="alpha-helical ferredoxin"/>
    <property type="match status" value="1"/>
</dbReference>
<dbReference type="SUPFAM" id="SSF100950">
    <property type="entry name" value="NagB/RpiA/CoA transferase-like"/>
    <property type="match status" value="1"/>
</dbReference>
<dbReference type="PROSITE" id="PS00198">
    <property type="entry name" value="4FE4S_FER_1"/>
    <property type="match status" value="1"/>
</dbReference>
<gene>
    <name evidence="1" type="primary">lutB</name>
    <name type="ordered locus">BCAH820_1393</name>
</gene>
<sequence>MSMKISEKKFNDRVGDGIQDSFMRGAVSSAQTRLYTNRLKAADELGNWEEWRELGEEIRQHTLENLDYYLMQLSENVSKRGGHVYFAKTKEEAAKYIQDVAKKKQAKKVVKSKSMVTEEISMNHALEEIGCEVLESDLGEYILQVDNDPPSHIIAPALHKNRTQIRNVFKEKLGYENSDDPYEMTKFVRKQLREKFMDAEIGVTGCNFAVANTGSLCLVTNEGNADLVMSIPKTQIAVMGMERMVPTMEELDVLVGLLCRSAVGQKLTSYVTVAGPIQEEEVDGPEEFHLVVVDNGRSQILGSEFRQVLQCIRCAACVNVCPVYRHVGGHSYGSIYSGPIGAVLTPLLGGYNDYKELPYASSLCGACTEACPVKIPLHDLLLKHRQVIVEQEGRAPLAEKLAMKMFSMGASSAALYKMGSKMAPAAMSPFTSGNRVSKGVGPLKNWTDIREFPAPSKERFRDWYKDHKKGGDK</sequence>
<feature type="chain" id="PRO_0000383963" description="Lactate utilization protein B">
    <location>
        <begin position="1"/>
        <end position="473"/>
    </location>
</feature>
<feature type="domain" description="4Fe-4S ferredoxin-type 1" evidence="1">
    <location>
        <begin position="302"/>
        <end position="332"/>
    </location>
</feature>
<feature type="domain" description="4Fe-4S ferredoxin-type 2" evidence="1">
    <location>
        <begin position="351"/>
        <end position="380"/>
    </location>
</feature>
<feature type="binding site" evidence="1">
    <location>
        <position position="311"/>
    </location>
    <ligand>
        <name>[4Fe-4S] cluster</name>
        <dbReference type="ChEBI" id="CHEBI:49883"/>
        <label>1</label>
    </ligand>
</feature>
<feature type="binding site" evidence="1">
    <location>
        <position position="314"/>
    </location>
    <ligand>
        <name>[4Fe-4S] cluster</name>
        <dbReference type="ChEBI" id="CHEBI:49883"/>
        <label>1</label>
    </ligand>
</feature>
<feature type="binding site" evidence="1">
    <location>
        <position position="317"/>
    </location>
    <ligand>
        <name>[4Fe-4S] cluster</name>
        <dbReference type="ChEBI" id="CHEBI:49883"/>
        <label>1</label>
    </ligand>
</feature>
<feature type="binding site" evidence="1">
    <location>
        <position position="321"/>
    </location>
    <ligand>
        <name>[4Fe-4S] cluster</name>
        <dbReference type="ChEBI" id="CHEBI:49883"/>
        <label>2</label>
    </ligand>
</feature>
<feature type="binding site" evidence="1">
    <location>
        <position position="364"/>
    </location>
    <ligand>
        <name>[4Fe-4S] cluster</name>
        <dbReference type="ChEBI" id="CHEBI:49883"/>
        <label>2</label>
    </ligand>
</feature>
<feature type="binding site" evidence="1">
    <location>
        <position position="367"/>
    </location>
    <ligand>
        <name>[4Fe-4S] cluster</name>
        <dbReference type="ChEBI" id="CHEBI:49883"/>
        <label>2</label>
    </ligand>
</feature>
<feature type="binding site" evidence="1">
    <location>
        <position position="371"/>
    </location>
    <ligand>
        <name>[4Fe-4S] cluster</name>
        <dbReference type="ChEBI" id="CHEBI:49883"/>
        <label>1</label>
    </ligand>
</feature>